<dbReference type="EC" id="4.1.3.3" evidence="1"/>
<dbReference type="EMBL" id="CP000948">
    <property type="protein sequence ID" value="ACB04299.1"/>
    <property type="molecule type" value="Genomic_DNA"/>
</dbReference>
<dbReference type="RefSeq" id="WP_000224714.1">
    <property type="nucleotide sequence ID" value="NC_010473.1"/>
</dbReference>
<dbReference type="SMR" id="B1XHJ8"/>
<dbReference type="GeneID" id="93778761"/>
<dbReference type="KEGG" id="ecd:ECDH10B_3402"/>
<dbReference type="HOGENOM" id="CLU_049343_6_0_6"/>
<dbReference type="UniPathway" id="UPA00629">
    <property type="reaction ID" value="UER00680"/>
</dbReference>
<dbReference type="GO" id="GO:0005829">
    <property type="term" value="C:cytosol"/>
    <property type="evidence" value="ECO:0007669"/>
    <property type="project" value="TreeGrafter"/>
</dbReference>
<dbReference type="GO" id="GO:0008747">
    <property type="term" value="F:N-acetylneuraminate lyase activity"/>
    <property type="evidence" value="ECO:0007669"/>
    <property type="project" value="UniProtKB-UniRule"/>
</dbReference>
<dbReference type="GO" id="GO:0005975">
    <property type="term" value="P:carbohydrate metabolic process"/>
    <property type="evidence" value="ECO:0007669"/>
    <property type="project" value="UniProtKB-UniRule"/>
</dbReference>
<dbReference type="GO" id="GO:0019262">
    <property type="term" value="P:N-acetylneuraminate catabolic process"/>
    <property type="evidence" value="ECO:0007669"/>
    <property type="project" value="UniProtKB-UniRule"/>
</dbReference>
<dbReference type="CDD" id="cd00954">
    <property type="entry name" value="NAL"/>
    <property type="match status" value="1"/>
</dbReference>
<dbReference type="FunFam" id="3.20.20.70:FF:000039">
    <property type="entry name" value="N-acetylneuraminate lyase"/>
    <property type="match status" value="1"/>
</dbReference>
<dbReference type="Gene3D" id="3.20.20.70">
    <property type="entry name" value="Aldolase class I"/>
    <property type="match status" value="1"/>
</dbReference>
<dbReference type="HAMAP" id="MF_01237">
    <property type="entry name" value="N_acetylneuram_lyase"/>
    <property type="match status" value="1"/>
</dbReference>
<dbReference type="InterPro" id="IPR013785">
    <property type="entry name" value="Aldolase_TIM"/>
</dbReference>
<dbReference type="InterPro" id="IPR002220">
    <property type="entry name" value="DapA-like"/>
</dbReference>
<dbReference type="InterPro" id="IPR005264">
    <property type="entry name" value="NanA"/>
</dbReference>
<dbReference type="InterPro" id="IPR020625">
    <property type="entry name" value="Schiff_base-form_aldolases_AS"/>
</dbReference>
<dbReference type="InterPro" id="IPR020624">
    <property type="entry name" value="Schiff_base-form_aldolases_CS"/>
</dbReference>
<dbReference type="NCBIfam" id="TIGR00683">
    <property type="entry name" value="nanA"/>
    <property type="match status" value="1"/>
</dbReference>
<dbReference type="NCBIfam" id="NF003164">
    <property type="entry name" value="PRK04147.1"/>
    <property type="match status" value="1"/>
</dbReference>
<dbReference type="PANTHER" id="PTHR42849">
    <property type="entry name" value="N-ACETYLNEURAMINATE LYASE"/>
    <property type="match status" value="1"/>
</dbReference>
<dbReference type="PANTHER" id="PTHR42849:SF1">
    <property type="entry name" value="N-ACETYLNEURAMINATE LYASE"/>
    <property type="match status" value="1"/>
</dbReference>
<dbReference type="Pfam" id="PF00701">
    <property type="entry name" value="DHDPS"/>
    <property type="match status" value="1"/>
</dbReference>
<dbReference type="PIRSF" id="PIRSF001365">
    <property type="entry name" value="DHDPS"/>
    <property type="match status" value="1"/>
</dbReference>
<dbReference type="PRINTS" id="PR00146">
    <property type="entry name" value="DHPICSNTHASE"/>
</dbReference>
<dbReference type="SMART" id="SM01130">
    <property type="entry name" value="DHDPS"/>
    <property type="match status" value="1"/>
</dbReference>
<dbReference type="SUPFAM" id="SSF51569">
    <property type="entry name" value="Aldolase"/>
    <property type="match status" value="1"/>
</dbReference>
<dbReference type="PROSITE" id="PS00665">
    <property type="entry name" value="DHDPS_1"/>
    <property type="match status" value="1"/>
</dbReference>
<dbReference type="PROSITE" id="PS00666">
    <property type="entry name" value="DHDPS_2"/>
    <property type="match status" value="1"/>
</dbReference>
<sequence>MATNLRGVMAALLTPFDQQQALDKASLRRLVQFNIQQGIDGLYVGGSTGEAFVQSLSEREQVLEIVAEEAKGKIKLIAHVGCVSTAESQQLAASAKRYGFDAVSAVTPFYYPFSFEEHCDHYRAIIDSADGLPMVVYNIPALSGVKLTLDQINTLVTLPGVGALKQTSGDLYQMEQIRREHPDLVLYNGYDEIFASGLLAGADGGIGSTYNIMGWRYQGIVKALKEGDIQTAQKLQTECNKVIDLLIKTGVFRGLKTVLHYMDVVSVPLCRKPFGPVDEKYLPELKALAQQLMQERG</sequence>
<proteinExistence type="inferred from homology"/>
<name>NANA_ECODH</name>
<protein>
    <recommendedName>
        <fullName evidence="1">N-acetylneuraminate lyase</fullName>
        <shortName evidence="1">NAL</shortName>
        <shortName evidence="1">Neu5Ac lyase</shortName>
        <ecNumber evidence="1">4.1.3.3</ecNumber>
    </recommendedName>
    <alternativeName>
        <fullName evidence="1">N-acetylneuraminate pyruvate-lyase</fullName>
    </alternativeName>
    <alternativeName>
        <fullName evidence="1">N-acetylneuraminic acid aldolase</fullName>
    </alternativeName>
    <alternativeName>
        <fullName evidence="1">Sialate lyase</fullName>
    </alternativeName>
    <alternativeName>
        <fullName evidence="1">Sialic acid aldolase</fullName>
    </alternativeName>
    <alternativeName>
        <fullName evidence="1">Sialic acid lyase</fullName>
    </alternativeName>
</protein>
<comment type="function">
    <text evidence="1">Catalyzes the reversible aldol cleavage of N-acetylneuraminic acid (sialic acid; Neu5Ac) to form pyruvate and N-acetylmannosamine (ManNAc) via a Schiff base intermediate.</text>
</comment>
<comment type="catalytic activity">
    <reaction evidence="1">
        <text>aceneuramate = aldehydo-N-acetyl-D-mannosamine + pyruvate</text>
        <dbReference type="Rhea" id="RHEA:23296"/>
        <dbReference type="ChEBI" id="CHEBI:15361"/>
        <dbReference type="ChEBI" id="CHEBI:17122"/>
        <dbReference type="ChEBI" id="CHEBI:173083"/>
        <dbReference type="EC" id="4.1.3.3"/>
    </reaction>
</comment>
<comment type="pathway">
    <text evidence="1">Amino-sugar metabolism; N-acetylneuraminate degradation; D-fructose 6-phosphate from N-acetylneuraminate: step 1/5.</text>
</comment>
<comment type="subunit">
    <text evidence="1">Homotetramer.</text>
</comment>
<comment type="subcellular location">
    <subcellularLocation>
        <location evidence="1">Cytoplasm</location>
    </subcellularLocation>
</comment>
<comment type="similarity">
    <text evidence="1">Belongs to the DapA family. NanA subfamily.</text>
</comment>
<keyword id="KW-0119">Carbohydrate metabolism</keyword>
<keyword id="KW-0963">Cytoplasm</keyword>
<keyword id="KW-0456">Lyase</keyword>
<keyword id="KW-0704">Schiff base</keyword>
<accession>B1XHJ8</accession>
<organism>
    <name type="scientific">Escherichia coli (strain K12 / DH10B)</name>
    <dbReference type="NCBI Taxonomy" id="316385"/>
    <lineage>
        <taxon>Bacteria</taxon>
        <taxon>Pseudomonadati</taxon>
        <taxon>Pseudomonadota</taxon>
        <taxon>Gammaproteobacteria</taxon>
        <taxon>Enterobacterales</taxon>
        <taxon>Enterobacteriaceae</taxon>
        <taxon>Escherichia</taxon>
    </lineage>
</organism>
<evidence type="ECO:0000255" key="1">
    <source>
        <dbReference type="HAMAP-Rule" id="MF_01237"/>
    </source>
</evidence>
<reference key="1">
    <citation type="journal article" date="2008" name="J. Bacteriol.">
        <title>The complete genome sequence of Escherichia coli DH10B: insights into the biology of a laboratory workhorse.</title>
        <authorList>
            <person name="Durfee T."/>
            <person name="Nelson R."/>
            <person name="Baldwin S."/>
            <person name="Plunkett G. III"/>
            <person name="Burland V."/>
            <person name="Mau B."/>
            <person name="Petrosino J.F."/>
            <person name="Qin X."/>
            <person name="Muzny D.M."/>
            <person name="Ayele M."/>
            <person name="Gibbs R.A."/>
            <person name="Csorgo B."/>
            <person name="Posfai G."/>
            <person name="Weinstock G.M."/>
            <person name="Blattner F.R."/>
        </authorList>
    </citation>
    <scope>NUCLEOTIDE SEQUENCE [LARGE SCALE GENOMIC DNA]</scope>
    <source>
        <strain>K12 / DH10B</strain>
    </source>
</reference>
<feature type="chain" id="PRO_1000139734" description="N-acetylneuraminate lyase">
    <location>
        <begin position="1"/>
        <end position="297"/>
    </location>
</feature>
<feature type="active site" description="Proton donor" evidence="1">
    <location>
        <position position="137"/>
    </location>
</feature>
<feature type="active site" description="Schiff-base intermediate with substrate" evidence="1">
    <location>
        <position position="165"/>
    </location>
</feature>
<feature type="binding site" evidence="1">
    <location>
        <position position="47"/>
    </location>
    <ligand>
        <name>aceneuramate</name>
        <dbReference type="ChEBI" id="CHEBI:173083"/>
    </ligand>
</feature>
<feature type="binding site" evidence="1">
    <location>
        <position position="48"/>
    </location>
    <ligand>
        <name>aceneuramate</name>
        <dbReference type="ChEBI" id="CHEBI:173083"/>
    </ligand>
</feature>
<feature type="binding site" evidence="1">
    <location>
        <position position="167"/>
    </location>
    <ligand>
        <name>aceneuramate</name>
        <dbReference type="ChEBI" id="CHEBI:173083"/>
    </ligand>
</feature>
<feature type="binding site" evidence="1">
    <location>
        <position position="189"/>
    </location>
    <ligand>
        <name>aceneuramate</name>
        <dbReference type="ChEBI" id="CHEBI:173083"/>
    </ligand>
</feature>
<feature type="binding site" evidence="1">
    <location>
        <position position="191"/>
    </location>
    <ligand>
        <name>aceneuramate</name>
        <dbReference type="ChEBI" id="CHEBI:173083"/>
    </ligand>
</feature>
<feature type="binding site" evidence="1">
    <location>
        <position position="192"/>
    </location>
    <ligand>
        <name>aceneuramate</name>
        <dbReference type="ChEBI" id="CHEBI:173083"/>
    </ligand>
</feature>
<feature type="binding site" evidence="1">
    <location>
        <position position="208"/>
    </location>
    <ligand>
        <name>aceneuramate</name>
        <dbReference type="ChEBI" id="CHEBI:173083"/>
    </ligand>
</feature>
<gene>
    <name evidence="1" type="primary">nanA</name>
    <name type="ordered locus">ECDH10B_3402</name>
</gene>